<proteinExistence type="evidence at protein level"/>
<comment type="function">
    <text evidence="1">Component of the 20S core proteasome complex involved in the proteolytic degradation of most intracellular proteins. This complex plays numerous essential roles within the cell by associating with different regulatory particles. Associated with two 19S regulatory particles, forms the 26S proteasome and thus participates in the ATP-dependent degradation of ubiquitinated proteins. The 26S proteasome plays a key role in the maintenance of protein homeostasis by removing misfolded or damaged proteins that could impair cellular functions, and by removing proteins whose functions are no longer required. Associated with the PA200 or PA28, the 20S proteasome mediates ubiquitin-independent protein degradation. This type of proteolysis is required in several pathways including spermatogenesis (20S-PA200 complex) or generation of a subset of MHC class I-presented antigenic peptides (20S-PA28 complex). Within the 20S core complex, PSMB6 displays a peptidylglutamyl-hydrolyzing activity also termed postacidic or caspase-like activity, meaning that the peptides bond hydrolysis occurs directly after acidic residues.</text>
</comment>
<comment type="catalytic activity">
    <reaction evidence="1">
        <text>Cleavage of peptide bonds with very broad specificity.</text>
        <dbReference type="EC" id="3.4.25.1"/>
    </reaction>
</comment>
<comment type="subunit">
    <text evidence="1">The 26S proteasome consists of a 20S proteasome core and two 19S regulatory subunits. The 20S proteasome core is a barrel-shaped complex made of 28 subunits that are arranged in four stacked rings. The two outer rings are each formed by seven alpha subunits, and the two inner rings are formed by seven beta subunits. The proteolytic activity is exerted by three beta-subunits PSMB5, PSMB6 and PSMB7.</text>
</comment>
<comment type="subcellular location">
    <subcellularLocation>
        <location evidence="1">Cytoplasm</location>
    </subcellularLocation>
    <subcellularLocation>
        <location evidence="1">Nucleus</location>
    </subcellularLocation>
    <text evidence="1">Translocated from the cytoplasm into the nucleus following interaction with AKIRIN2, which bridges the proteasome with the nuclear import receptor IPO9.</text>
</comment>
<comment type="similarity">
    <text evidence="2">Belongs to the peptidase T1B family.</text>
</comment>
<comment type="sequence caution" evidence="4">
    <conflict type="erroneous initiation">
        <sequence resource="EMBL-CDS" id="BAA01586"/>
    </conflict>
</comment>
<name>PSB6_RAT</name>
<accession>P28073</accession>
<accession>Q6IE68</accession>
<accession>Q6PDW5</accession>
<reference key="1">
    <citation type="journal article" date="2004" name="Genome Res.">
        <title>The status, quality, and expansion of the NIH full-length cDNA project: the Mammalian Gene Collection (MGC).</title>
        <authorList>
            <consortium name="The MGC Project Team"/>
        </authorList>
    </citation>
    <scope>NUCLEOTIDE SEQUENCE [LARGE SCALE MRNA]</scope>
    <source>
        <tissue>Pituitary</tissue>
    </source>
</reference>
<reference key="2">
    <citation type="journal article" date="2004" name="Nature">
        <title>Genome sequence of the Brown Norway rat yields insights into mammalian evolution.</title>
        <authorList>
            <person name="Gibbs R.A."/>
            <person name="Weinstock G.M."/>
            <person name="Metzker M.L."/>
            <person name="Muzny D.M."/>
            <person name="Sodergren E.J."/>
            <person name="Scherer S."/>
            <person name="Scott G."/>
            <person name="Steffen D."/>
            <person name="Worley K.C."/>
            <person name="Burch P.E."/>
            <person name="Okwuonu G."/>
            <person name="Hines S."/>
            <person name="Lewis L."/>
            <person name="Deramo C."/>
            <person name="Delgado O."/>
            <person name="Dugan-Rocha S."/>
            <person name="Miner G."/>
            <person name="Morgan M."/>
            <person name="Hawes A."/>
            <person name="Gill R."/>
            <person name="Holt R.A."/>
            <person name="Adams M.D."/>
            <person name="Amanatides P.G."/>
            <person name="Baden-Tillson H."/>
            <person name="Barnstead M."/>
            <person name="Chin S."/>
            <person name="Evans C.A."/>
            <person name="Ferriera S."/>
            <person name="Fosler C."/>
            <person name="Glodek A."/>
            <person name="Gu Z."/>
            <person name="Jennings D."/>
            <person name="Kraft C.L."/>
            <person name="Nguyen T."/>
            <person name="Pfannkoch C.M."/>
            <person name="Sitter C."/>
            <person name="Sutton G.G."/>
            <person name="Venter J.C."/>
            <person name="Woodage T."/>
            <person name="Smith D."/>
            <person name="Lee H.-M."/>
            <person name="Gustafson E."/>
            <person name="Cahill P."/>
            <person name="Kana A."/>
            <person name="Doucette-Stamm L."/>
            <person name="Weinstock K."/>
            <person name="Fechtel K."/>
            <person name="Weiss R.B."/>
            <person name="Dunn D.M."/>
            <person name="Green E.D."/>
            <person name="Blakesley R.W."/>
            <person name="Bouffard G.G."/>
            <person name="De Jong P.J."/>
            <person name="Osoegawa K."/>
            <person name="Zhu B."/>
            <person name="Marra M."/>
            <person name="Schein J."/>
            <person name="Bosdet I."/>
            <person name="Fjell C."/>
            <person name="Jones S."/>
            <person name="Krzywinski M."/>
            <person name="Mathewson C."/>
            <person name="Siddiqui A."/>
            <person name="Wye N."/>
            <person name="McPherson J."/>
            <person name="Zhao S."/>
            <person name="Fraser C.M."/>
            <person name="Shetty J."/>
            <person name="Shatsman S."/>
            <person name="Geer K."/>
            <person name="Chen Y."/>
            <person name="Abramzon S."/>
            <person name="Nierman W.C."/>
            <person name="Havlak P.H."/>
            <person name="Chen R."/>
            <person name="Durbin K.J."/>
            <person name="Egan A."/>
            <person name="Ren Y."/>
            <person name="Song X.-Z."/>
            <person name="Li B."/>
            <person name="Liu Y."/>
            <person name="Qin X."/>
            <person name="Cawley S."/>
            <person name="Cooney A.J."/>
            <person name="D'Souza L.M."/>
            <person name="Martin K."/>
            <person name="Wu J.Q."/>
            <person name="Gonzalez-Garay M.L."/>
            <person name="Jackson A.R."/>
            <person name="Kalafus K.J."/>
            <person name="McLeod M.P."/>
            <person name="Milosavljevic A."/>
            <person name="Virk D."/>
            <person name="Volkov A."/>
            <person name="Wheeler D.A."/>
            <person name="Zhang Z."/>
            <person name="Bailey J.A."/>
            <person name="Eichler E.E."/>
            <person name="Tuzun E."/>
            <person name="Birney E."/>
            <person name="Mongin E."/>
            <person name="Ureta-Vidal A."/>
            <person name="Woodwark C."/>
            <person name="Zdobnov E."/>
            <person name="Bork P."/>
            <person name="Suyama M."/>
            <person name="Torrents D."/>
            <person name="Alexandersson M."/>
            <person name="Trask B.J."/>
            <person name="Young J.M."/>
            <person name="Huang H."/>
            <person name="Wang H."/>
            <person name="Xing H."/>
            <person name="Daniels S."/>
            <person name="Gietzen D."/>
            <person name="Schmidt J."/>
            <person name="Stevens K."/>
            <person name="Vitt U."/>
            <person name="Wingrove J."/>
            <person name="Camara F."/>
            <person name="Mar Alba M."/>
            <person name="Abril J.F."/>
            <person name="Guigo R."/>
            <person name="Smit A."/>
            <person name="Dubchak I."/>
            <person name="Rubin E.M."/>
            <person name="Couronne O."/>
            <person name="Poliakov A."/>
            <person name="Huebner N."/>
            <person name="Ganten D."/>
            <person name="Goesele C."/>
            <person name="Hummel O."/>
            <person name="Kreitler T."/>
            <person name="Lee Y.-A."/>
            <person name="Monti J."/>
            <person name="Schulz H."/>
            <person name="Zimdahl H."/>
            <person name="Himmelbauer H."/>
            <person name="Lehrach H."/>
            <person name="Jacob H.J."/>
            <person name="Bromberg S."/>
            <person name="Gullings-Handley J."/>
            <person name="Jensen-Seaman M.I."/>
            <person name="Kwitek A.E."/>
            <person name="Lazar J."/>
            <person name="Pasko D."/>
            <person name="Tonellato P.J."/>
            <person name="Twigger S."/>
            <person name="Ponting C.P."/>
            <person name="Duarte J.M."/>
            <person name="Rice S."/>
            <person name="Goodstadt L."/>
            <person name="Beatson S.A."/>
            <person name="Emes R.D."/>
            <person name="Winter E.E."/>
            <person name="Webber C."/>
            <person name="Brandt P."/>
            <person name="Nyakatura G."/>
            <person name="Adetobi M."/>
            <person name="Chiaromonte F."/>
            <person name="Elnitski L."/>
            <person name="Eswara P."/>
            <person name="Hardison R.C."/>
            <person name="Hou M."/>
            <person name="Kolbe D."/>
            <person name="Makova K."/>
            <person name="Miller W."/>
            <person name="Nekrutenko A."/>
            <person name="Riemer C."/>
            <person name="Schwartz S."/>
            <person name="Taylor J."/>
            <person name="Yang S."/>
            <person name="Zhang Y."/>
            <person name="Lindpaintner K."/>
            <person name="Andrews T.D."/>
            <person name="Caccamo M."/>
            <person name="Clamp M."/>
            <person name="Clarke L."/>
            <person name="Curwen V."/>
            <person name="Durbin R.M."/>
            <person name="Eyras E."/>
            <person name="Searle S.M."/>
            <person name="Cooper G.M."/>
            <person name="Batzoglou S."/>
            <person name="Brudno M."/>
            <person name="Sidow A."/>
            <person name="Stone E.A."/>
            <person name="Payseur B.A."/>
            <person name="Bourque G."/>
            <person name="Lopez-Otin C."/>
            <person name="Puente X.S."/>
            <person name="Chakrabarti K."/>
            <person name="Chatterji S."/>
            <person name="Dewey C."/>
            <person name="Pachter L."/>
            <person name="Bray N."/>
            <person name="Yap V.B."/>
            <person name="Caspi A."/>
            <person name="Tesler G."/>
            <person name="Pevzner P.A."/>
            <person name="Haussler D."/>
            <person name="Roskin K.M."/>
            <person name="Baertsch R."/>
            <person name="Clawson H."/>
            <person name="Furey T.S."/>
            <person name="Hinrichs A.S."/>
            <person name="Karolchik D."/>
            <person name="Kent W.J."/>
            <person name="Rosenbloom K.R."/>
            <person name="Trumbower H."/>
            <person name="Weirauch M."/>
            <person name="Cooper D.N."/>
            <person name="Stenson P.D."/>
            <person name="Ma B."/>
            <person name="Brent M."/>
            <person name="Arumugam M."/>
            <person name="Shteynberg D."/>
            <person name="Copley R.R."/>
            <person name="Taylor M.S."/>
            <person name="Riethman H."/>
            <person name="Mudunuri U."/>
            <person name="Peterson J."/>
            <person name="Guyer M."/>
            <person name="Felsenfeld A."/>
            <person name="Old S."/>
            <person name="Mockrin S."/>
            <person name="Collins F.S."/>
        </authorList>
    </citation>
    <scope>NUCLEOTIDE SEQUENCE [LARGE SCALE GENOMIC DNA]</scope>
    <source>
        <strain>Brown Norway</strain>
    </source>
</reference>
<reference key="3">
    <citation type="journal article" date="1992" name="J. Biochem.">
        <title>Molecular cloning of cDNAs for rat proteasomes: deduced primary structures of four other subunits.</title>
        <authorList>
            <person name="Tamura T."/>
            <person name="Shimbara N."/>
            <person name="Aki M."/>
            <person name="Ishida N."/>
            <person name="Bey F."/>
            <person name="Scherrer K."/>
            <person name="Tanaka K."/>
            <person name="Ichihara A."/>
        </authorList>
    </citation>
    <scope>NUCLEOTIDE SEQUENCE [MRNA] OF 2-238</scope>
</reference>
<reference key="4">
    <citation type="journal article" date="1990" name="FEBS Lett.">
        <title>N-terminal sequence similarities between components of the multicatalytic proteinase complex.</title>
        <authorList>
            <person name="Lilley K.S."/>
            <person name="Davison M.D."/>
            <person name="Rivett A.J."/>
        </authorList>
    </citation>
    <scope>PROTEIN SEQUENCE OF 34-51</scope>
</reference>
<reference key="5">
    <citation type="submission" date="2007-04" db="UniProtKB">
        <authorList>
            <person name="Lubec G."/>
            <person name="Diao W."/>
        </authorList>
    </citation>
    <scope>PROTEIN SEQUENCE OF 67-78 AND 209-229</scope>
    <scope>IDENTIFICATION BY MASS SPECTROMETRY</scope>
    <source>
        <strain>Sprague-Dawley</strain>
        <tissue>Hippocampus</tissue>
    </source>
</reference>
<reference key="6">
    <citation type="journal article" date="2004" name="Genome Res.">
        <title>A genomic analysis of rat proteases and protease inhibitors.</title>
        <authorList>
            <person name="Puente X.S."/>
            <person name="Lopez-Otin C."/>
        </authorList>
    </citation>
    <scope>IDENTIFICATION</scope>
</reference>
<dbReference type="EC" id="3.4.25.1" evidence="1"/>
<dbReference type="EMBL" id="BC058451">
    <property type="protein sequence ID" value="AAH58451.1"/>
    <property type="molecule type" value="mRNA"/>
</dbReference>
<dbReference type="EMBL" id="AABR03076595">
    <property type="status" value="NOT_ANNOTATED_CDS"/>
    <property type="molecule type" value="Genomic_DNA"/>
</dbReference>
<dbReference type="EMBL" id="D10754">
    <property type="protein sequence ID" value="BAA01586.1"/>
    <property type="status" value="ALT_INIT"/>
    <property type="molecule type" value="mRNA"/>
</dbReference>
<dbReference type="EMBL" id="BN000325">
    <property type="protein sequence ID" value="CAE48380.1"/>
    <property type="molecule type" value="mRNA"/>
</dbReference>
<dbReference type="PIR" id="JX0228">
    <property type="entry name" value="JX0228"/>
</dbReference>
<dbReference type="PIR" id="S09086">
    <property type="entry name" value="S09086"/>
</dbReference>
<dbReference type="RefSeq" id="NP_476440.2">
    <property type="nucleotide sequence ID" value="NM_057099.4"/>
</dbReference>
<dbReference type="PDB" id="6EPC">
    <property type="method" value="EM"/>
    <property type="resolution" value="12.30 A"/>
    <property type="chains" value="1=1-238"/>
</dbReference>
<dbReference type="PDB" id="6EPD">
    <property type="method" value="EM"/>
    <property type="resolution" value="15.40 A"/>
    <property type="chains" value="1=1-238"/>
</dbReference>
<dbReference type="PDB" id="6EPE">
    <property type="method" value="EM"/>
    <property type="resolution" value="12.80 A"/>
    <property type="chains" value="1=1-238"/>
</dbReference>
<dbReference type="PDB" id="6EPF">
    <property type="method" value="EM"/>
    <property type="resolution" value="11.80 A"/>
    <property type="chains" value="1=1-238"/>
</dbReference>
<dbReference type="PDB" id="6TU3">
    <property type="method" value="EM"/>
    <property type="resolution" value="2.70 A"/>
    <property type="chains" value="H/V=1-238"/>
</dbReference>
<dbReference type="PDBsum" id="6EPC"/>
<dbReference type="PDBsum" id="6EPD"/>
<dbReference type="PDBsum" id="6EPE"/>
<dbReference type="PDBsum" id="6EPF"/>
<dbReference type="PDBsum" id="6TU3"/>
<dbReference type="EMDB" id="EMD-10586"/>
<dbReference type="EMDB" id="EMD-3913"/>
<dbReference type="EMDB" id="EMD-3914"/>
<dbReference type="EMDB" id="EMD-3915"/>
<dbReference type="EMDB" id="EMD-3916"/>
<dbReference type="SMR" id="P28073"/>
<dbReference type="BioGRID" id="248287">
    <property type="interactions" value="3"/>
</dbReference>
<dbReference type="ComplexPortal" id="CPX-8965">
    <property type="entry name" value="30S proteasome complex"/>
</dbReference>
<dbReference type="FunCoup" id="P28073">
    <property type="interactions" value="3111"/>
</dbReference>
<dbReference type="IntAct" id="P28073">
    <property type="interactions" value="1"/>
</dbReference>
<dbReference type="STRING" id="10116.ENSRNOP00000026507"/>
<dbReference type="MEROPS" id="T01.010"/>
<dbReference type="PhosphoSitePlus" id="P28073"/>
<dbReference type="jPOST" id="P28073"/>
<dbReference type="PaxDb" id="10116-ENSRNOP00000026507"/>
<dbReference type="Ensembl" id="ENSRNOT00000026507.6">
    <property type="protein sequence ID" value="ENSRNOP00000026507.4"/>
    <property type="gene ID" value="ENSRNOG00000019551.6"/>
</dbReference>
<dbReference type="GeneID" id="29666"/>
<dbReference type="KEGG" id="rno:100360846"/>
<dbReference type="KEGG" id="rno:29666"/>
<dbReference type="UCSC" id="RGD:61881">
    <property type="organism name" value="rat"/>
</dbReference>
<dbReference type="AGR" id="RGD:2321312"/>
<dbReference type="AGR" id="RGD:61881"/>
<dbReference type="CTD" id="100360846"/>
<dbReference type="CTD" id="5694"/>
<dbReference type="RGD" id="61881">
    <property type="gene designation" value="Psmb6"/>
</dbReference>
<dbReference type="eggNOG" id="KOG0174">
    <property type="taxonomic scope" value="Eukaryota"/>
</dbReference>
<dbReference type="GeneTree" id="ENSGT00940000155114"/>
<dbReference type="HOGENOM" id="CLU_035750_5_1_1"/>
<dbReference type="InParanoid" id="P28073"/>
<dbReference type="OMA" id="VHERIFC"/>
<dbReference type="OrthoDB" id="7854943at2759"/>
<dbReference type="PhylomeDB" id="P28073"/>
<dbReference type="TreeFam" id="TF106221"/>
<dbReference type="Reactome" id="R-RNO-1169091">
    <property type="pathway name" value="Activation of NF-kappaB in B cells"/>
</dbReference>
<dbReference type="Reactome" id="R-RNO-1234176">
    <property type="pathway name" value="Oxygen-dependent proline hydroxylation of Hypoxia-inducible Factor Alpha"/>
</dbReference>
<dbReference type="Reactome" id="R-RNO-1236978">
    <property type="pathway name" value="Cross-presentation of soluble exogenous antigens (endosomes)"/>
</dbReference>
<dbReference type="Reactome" id="R-RNO-174084">
    <property type="pathway name" value="Autodegradation of Cdh1 by Cdh1:APC/C"/>
</dbReference>
<dbReference type="Reactome" id="R-RNO-174113">
    <property type="pathway name" value="SCF-beta-TrCP mediated degradation of Emi1"/>
</dbReference>
<dbReference type="Reactome" id="R-RNO-174154">
    <property type="pathway name" value="APC/C:Cdc20 mediated degradation of Securin"/>
</dbReference>
<dbReference type="Reactome" id="R-RNO-174178">
    <property type="pathway name" value="APC/C:Cdh1 mediated degradation of Cdc20 and other APC/C:Cdh1 targeted proteins in late mitosis/early G1"/>
</dbReference>
<dbReference type="Reactome" id="R-RNO-174184">
    <property type="pathway name" value="Cdc20:Phospho-APC/C mediated degradation of Cyclin A"/>
</dbReference>
<dbReference type="Reactome" id="R-RNO-187577">
    <property type="pathway name" value="SCF(Skp2)-mediated degradation of p27/p21"/>
</dbReference>
<dbReference type="Reactome" id="R-RNO-195253">
    <property type="pathway name" value="Degradation of beta-catenin by the destruction complex"/>
</dbReference>
<dbReference type="Reactome" id="R-RNO-2467813">
    <property type="pathway name" value="Separation of Sister Chromatids"/>
</dbReference>
<dbReference type="Reactome" id="R-RNO-349425">
    <property type="pathway name" value="Autodegradation of the E3 ubiquitin ligase COP1"/>
</dbReference>
<dbReference type="Reactome" id="R-RNO-350562">
    <property type="pathway name" value="Regulation of ornithine decarboxylase (ODC)"/>
</dbReference>
<dbReference type="Reactome" id="R-RNO-382556">
    <property type="pathway name" value="ABC-family proteins mediated transport"/>
</dbReference>
<dbReference type="Reactome" id="R-RNO-450408">
    <property type="pathway name" value="AUF1 (hnRNP D0) binds and destabilizes mRNA"/>
</dbReference>
<dbReference type="Reactome" id="R-RNO-4608870">
    <property type="pathway name" value="Asymmetric localization of PCP proteins"/>
</dbReference>
<dbReference type="Reactome" id="R-RNO-4641257">
    <property type="pathway name" value="Degradation of AXIN"/>
</dbReference>
<dbReference type="Reactome" id="R-RNO-4641258">
    <property type="pathway name" value="Degradation of DVL"/>
</dbReference>
<dbReference type="Reactome" id="R-RNO-5358346">
    <property type="pathway name" value="Hedgehog ligand biogenesis"/>
</dbReference>
<dbReference type="Reactome" id="R-RNO-5607761">
    <property type="pathway name" value="Dectin-1 mediated noncanonical NF-kB signaling"/>
</dbReference>
<dbReference type="Reactome" id="R-RNO-5610780">
    <property type="pathway name" value="Degradation of GLI1 by the proteasome"/>
</dbReference>
<dbReference type="Reactome" id="R-RNO-5610785">
    <property type="pathway name" value="GLI3 is processed to GLI3R by the proteasome"/>
</dbReference>
<dbReference type="Reactome" id="R-RNO-5632684">
    <property type="pathway name" value="Hedgehog 'on' state"/>
</dbReference>
<dbReference type="Reactome" id="R-RNO-5658442">
    <property type="pathway name" value="Regulation of RAS by GAPs"/>
</dbReference>
<dbReference type="Reactome" id="R-RNO-5668541">
    <property type="pathway name" value="TNFR2 non-canonical NF-kB pathway"/>
</dbReference>
<dbReference type="Reactome" id="R-RNO-5676590">
    <property type="pathway name" value="NIK--&gt;noncanonical NF-kB signaling"/>
</dbReference>
<dbReference type="Reactome" id="R-RNO-5687128">
    <property type="pathway name" value="MAPK6/MAPK4 signaling"/>
</dbReference>
<dbReference type="Reactome" id="R-RNO-5689603">
    <property type="pathway name" value="UCH proteinases"/>
</dbReference>
<dbReference type="Reactome" id="R-RNO-5689880">
    <property type="pathway name" value="Ub-specific processing proteases"/>
</dbReference>
<dbReference type="Reactome" id="R-RNO-68867">
    <property type="pathway name" value="Assembly of the pre-replicative complex"/>
</dbReference>
<dbReference type="Reactome" id="R-RNO-68949">
    <property type="pathway name" value="Orc1 removal from chromatin"/>
</dbReference>
<dbReference type="Reactome" id="R-RNO-69017">
    <property type="pathway name" value="CDK-mediated phosphorylation and removal of Cdc6"/>
</dbReference>
<dbReference type="Reactome" id="R-RNO-69481">
    <property type="pathway name" value="G2/M Checkpoints"/>
</dbReference>
<dbReference type="Reactome" id="R-RNO-69601">
    <property type="pathway name" value="Ubiquitin Mediated Degradation of Phosphorylated Cdc25A"/>
</dbReference>
<dbReference type="Reactome" id="R-RNO-75815">
    <property type="pathway name" value="Ubiquitin-dependent degradation of Cyclin D"/>
</dbReference>
<dbReference type="Reactome" id="R-RNO-8852276">
    <property type="pathway name" value="The role of GTSE1 in G2/M progression after G2 checkpoint"/>
</dbReference>
<dbReference type="Reactome" id="R-RNO-8854050">
    <property type="pathway name" value="FBXL7 down-regulates AURKA during mitotic entry and in early mitosis"/>
</dbReference>
<dbReference type="Reactome" id="R-RNO-8939236">
    <property type="pathway name" value="RUNX1 regulates transcription of genes involved in differentiation of HSCs"/>
</dbReference>
<dbReference type="Reactome" id="R-RNO-8941858">
    <property type="pathway name" value="Regulation of RUNX3 expression and activity"/>
</dbReference>
<dbReference type="Reactome" id="R-RNO-8948751">
    <property type="pathway name" value="Regulation of PTEN stability and activity"/>
</dbReference>
<dbReference type="Reactome" id="R-RNO-8951664">
    <property type="pathway name" value="Neddylation"/>
</dbReference>
<dbReference type="Reactome" id="R-RNO-9755511">
    <property type="pathway name" value="KEAP1-NFE2L2 pathway"/>
</dbReference>
<dbReference type="Reactome" id="R-RNO-9762114">
    <property type="pathway name" value="GSK3B and BTRC:CUL1-mediated-degradation of NFE2L2"/>
</dbReference>
<dbReference type="Reactome" id="R-RNO-983168">
    <property type="pathway name" value="Antigen processing: Ubiquitination &amp; Proteasome degradation"/>
</dbReference>
<dbReference type="Reactome" id="R-RNO-9907900">
    <property type="pathway name" value="Proteasome assembly"/>
</dbReference>
<dbReference type="PRO" id="PR:P28073"/>
<dbReference type="Proteomes" id="UP000002494">
    <property type="component" value="Chromosome 10"/>
</dbReference>
<dbReference type="Bgee" id="ENSRNOG00000019551">
    <property type="expression patterns" value="Expressed in quadriceps femoris and 16 other cell types or tissues"/>
</dbReference>
<dbReference type="GO" id="GO:0005737">
    <property type="term" value="C:cytoplasm"/>
    <property type="evidence" value="ECO:0000266"/>
    <property type="project" value="RGD"/>
</dbReference>
<dbReference type="GO" id="GO:0005829">
    <property type="term" value="C:cytosol"/>
    <property type="evidence" value="ECO:0000318"/>
    <property type="project" value="GO_Central"/>
</dbReference>
<dbReference type="GO" id="GO:0005634">
    <property type="term" value="C:nucleus"/>
    <property type="evidence" value="ECO:0000266"/>
    <property type="project" value="RGD"/>
</dbReference>
<dbReference type="GO" id="GO:0000502">
    <property type="term" value="C:proteasome complex"/>
    <property type="evidence" value="ECO:0000266"/>
    <property type="project" value="RGD"/>
</dbReference>
<dbReference type="GO" id="GO:0005839">
    <property type="term" value="C:proteasome core complex"/>
    <property type="evidence" value="ECO:0000250"/>
    <property type="project" value="UniProtKB"/>
</dbReference>
<dbReference type="GO" id="GO:0019774">
    <property type="term" value="C:proteasome core complex, beta-subunit complex"/>
    <property type="evidence" value="ECO:0000250"/>
    <property type="project" value="UniProtKB"/>
</dbReference>
<dbReference type="GO" id="GO:0004175">
    <property type="term" value="F:endopeptidase activity"/>
    <property type="evidence" value="ECO:0000318"/>
    <property type="project" value="GO_Central"/>
</dbReference>
<dbReference type="GO" id="GO:0004298">
    <property type="term" value="F:threonine-type endopeptidase activity"/>
    <property type="evidence" value="ECO:0007669"/>
    <property type="project" value="UniProtKB-KW"/>
</dbReference>
<dbReference type="GO" id="GO:0043161">
    <property type="term" value="P:proteasome-mediated ubiquitin-dependent protein catabolic process"/>
    <property type="evidence" value="ECO:0000318"/>
    <property type="project" value="GO_Central"/>
</dbReference>
<dbReference type="CDD" id="cd03762">
    <property type="entry name" value="proteasome_beta_type_6"/>
    <property type="match status" value="1"/>
</dbReference>
<dbReference type="FunFam" id="3.60.20.10:FF:000010">
    <property type="entry name" value="Proteasome subunit beta type-1"/>
    <property type="match status" value="1"/>
</dbReference>
<dbReference type="Gene3D" id="3.60.20.10">
    <property type="entry name" value="Glutamine Phosphoribosylpyrophosphate, subunit 1, domain 1"/>
    <property type="match status" value="1"/>
</dbReference>
<dbReference type="InterPro" id="IPR029055">
    <property type="entry name" value="Ntn_hydrolases_N"/>
</dbReference>
<dbReference type="InterPro" id="IPR000243">
    <property type="entry name" value="Pept_T1A_subB"/>
</dbReference>
<dbReference type="InterPro" id="IPR016050">
    <property type="entry name" value="Proteasome_bsu_CS"/>
</dbReference>
<dbReference type="InterPro" id="IPR001353">
    <property type="entry name" value="Proteasome_sua/b"/>
</dbReference>
<dbReference type="InterPro" id="IPR023333">
    <property type="entry name" value="Proteasome_suB-type"/>
</dbReference>
<dbReference type="PANTHER" id="PTHR32194">
    <property type="entry name" value="METALLOPROTEASE TLDD"/>
    <property type="match status" value="1"/>
</dbReference>
<dbReference type="PANTHER" id="PTHR32194:SF14">
    <property type="entry name" value="PROTEASOME SUBUNIT BETA"/>
    <property type="match status" value="1"/>
</dbReference>
<dbReference type="Pfam" id="PF00227">
    <property type="entry name" value="Proteasome"/>
    <property type="match status" value="1"/>
</dbReference>
<dbReference type="PRINTS" id="PR00141">
    <property type="entry name" value="PROTEASOME"/>
</dbReference>
<dbReference type="SUPFAM" id="SSF56235">
    <property type="entry name" value="N-terminal nucleophile aminohydrolases (Ntn hydrolases)"/>
    <property type="match status" value="1"/>
</dbReference>
<dbReference type="PROSITE" id="PS00854">
    <property type="entry name" value="PROTEASOME_BETA_1"/>
    <property type="match status" value="1"/>
</dbReference>
<dbReference type="PROSITE" id="PS51476">
    <property type="entry name" value="PROTEASOME_BETA_2"/>
    <property type="match status" value="1"/>
</dbReference>
<sequence length="238" mass="25290">MAAALAVRGAVSAPAFGPEALTPDWENREVSTGTTIMAVQFDGGVVLGADSRTTTGSYIANRVTDKLTPIHDHIFCCRSGSAADTQAVADAVTYQLGFHSIELNEPPLVHTAASLFKEMCYRYREDLMAGIIIAGWDPQEGGQVYSVPMGGMMVRQSFAIGGSGSSYIYGYVDATYREGMTKDECLQFTANALALAMERDGSSGGVIRLAAIQQSGVERQVLLGDQIPKVTISTLPPP</sequence>
<keyword id="KW-0002">3D-structure</keyword>
<keyword id="KW-0007">Acetylation</keyword>
<keyword id="KW-0963">Cytoplasm</keyword>
<keyword id="KW-0903">Direct protein sequencing</keyword>
<keyword id="KW-0378">Hydrolase</keyword>
<keyword id="KW-0539">Nucleus</keyword>
<keyword id="KW-0597">Phosphoprotein</keyword>
<keyword id="KW-0645">Protease</keyword>
<keyword id="KW-0647">Proteasome</keyword>
<keyword id="KW-1185">Reference proteome</keyword>
<keyword id="KW-0888">Threonine protease</keyword>
<keyword id="KW-0865">Zymogen</keyword>
<protein>
    <recommendedName>
        <fullName>Proteasome subunit beta type-6</fullName>
        <ecNumber evidence="1">3.4.25.1</ecNumber>
    </recommendedName>
    <alternativeName>
        <fullName>Macropain delta chain</fullName>
    </alternativeName>
    <alternativeName>
        <fullName>Multicatalytic endopeptidase complex delta chain</fullName>
    </alternativeName>
    <alternativeName>
        <fullName>Proteasome chain 5</fullName>
    </alternativeName>
    <alternativeName>
        <fullName>Proteasome delta chain</fullName>
    </alternativeName>
    <alternativeName>
        <fullName>Proteasome subunit Y</fullName>
    </alternativeName>
    <alternativeName>
        <fullName>Proteasome subunit beta-1</fullName>
        <shortName>beta-1</shortName>
    </alternativeName>
</protein>
<feature type="initiator methionine" description="Removed" evidence="1">
    <location>
        <position position="1"/>
    </location>
</feature>
<feature type="propeptide" id="PRO_0000026617" description="Removed in mature form" evidence="3">
    <location>
        <begin position="2"/>
        <end position="33"/>
    </location>
</feature>
<feature type="chain" id="PRO_0000026618" description="Proteasome subunit beta type-6">
    <location>
        <begin position="34"/>
        <end position="238"/>
    </location>
</feature>
<feature type="active site" description="Nucleophile" evidence="1">
    <location>
        <position position="34"/>
    </location>
</feature>
<feature type="modified residue" description="N-acetylalanine" evidence="1">
    <location>
        <position position="2"/>
    </location>
</feature>
<feature type="modified residue" description="Phosphothreonine" evidence="1">
    <location>
        <position position="68"/>
    </location>
</feature>
<feature type="strand" evidence="5">
    <location>
        <begin position="35"/>
        <end position="41"/>
    </location>
</feature>
<feature type="strand" evidence="5">
    <location>
        <begin position="44"/>
        <end position="49"/>
    </location>
</feature>
<feature type="strand" evidence="5">
    <location>
        <begin position="53"/>
        <end position="55"/>
    </location>
</feature>
<feature type="strand" evidence="5">
    <location>
        <begin position="58"/>
        <end position="63"/>
    </location>
</feature>
<feature type="strand" evidence="5">
    <location>
        <begin position="67"/>
        <end position="77"/>
    </location>
</feature>
<feature type="helix" evidence="5">
    <location>
        <begin position="82"/>
        <end position="103"/>
    </location>
</feature>
<feature type="helix" evidence="5">
    <location>
        <begin position="109"/>
        <end position="122"/>
    </location>
</feature>
<feature type="turn" evidence="5">
    <location>
        <begin position="123"/>
        <end position="126"/>
    </location>
</feature>
<feature type="strand" evidence="5">
    <location>
        <begin position="131"/>
        <end position="137"/>
    </location>
</feature>
<feature type="turn" evidence="5">
    <location>
        <begin position="138"/>
        <end position="140"/>
    </location>
</feature>
<feature type="strand" evidence="5">
    <location>
        <begin position="141"/>
        <end position="147"/>
    </location>
</feature>
<feature type="turn" evidence="5">
    <location>
        <begin position="149"/>
        <end position="151"/>
    </location>
</feature>
<feature type="strand" evidence="5">
    <location>
        <begin position="154"/>
        <end position="164"/>
    </location>
</feature>
<feature type="helix" evidence="5">
    <location>
        <begin position="165"/>
        <end position="168"/>
    </location>
</feature>
<feature type="helix" evidence="5">
    <location>
        <begin position="169"/>
        <end position="175"/>
    </location>
</feature>
<feature type="helix" evidence="5">
    <location>
        <begin position="182"/>
        <end position="197"/>
    </location>
</feature>
<feature type="strand" evidence="5">
    <location>
        <begin position="207"/>
        <end position="212"/>
    </location>
</feature>
<feature type="strand" evidence="5">
    <location>
        <begin position="217"/>
        <end position="222"/>
    </location>
</feature>
<feature type="helix" evidence="5">
    <location>
        <begin position="224"/>
        <end position="226"/>
    </location>
</feature>
<gene>
    <name type="primary">Psmb6</name>
    <name type="synonym">Psmb6l</name>
</gene>
<organism>
    <name type="scientific">Rattus norvegicus</name>
    <name type="common">Rat</name>
    <dbReference type="NCBI Taxonomy" id="10116"/>
    <lineage>
        <taxon>Eukaryota</taxon>
        <taxon>Metazoa</taxon>
        <taxon>Chordata</taxon>
        <taxon>Craniata</taxon>
        <taxon>Vertebrata</taxon>
        <taxon>Euteleostomi</taxon>
        <taxon>Mammalia</taxon>
        <taxon>Eutheria</taxon>
        <taxon>Euarchontoglires</taxon>
        <taxon>Glires</taxon>
        <taxon>Rodentia</taxon>
        <taxon>Myomorpha</taxon>
        <taxon>Muroidea</taxon>
        <taxon>Muridae</taxon>
        <taxon>Murinae</taxon>
        <taxon>Rattus</taxon>
    </lineage>
</organism>
<evidence type="ECO:0000250" key="1">
    <source>
        <dbReference type="UniProtKB" id="P28072"/>
    </source>
</evidence>
<evidence type="ECO:0000255" key="2">
    <source>
        <dbReference type="PROSITE-ProRule" id="PRU00809"/>
    </source>
</evidence>
<evidence type="ECO:0000269" key="3">
    <source>
    </source>
</evidence>
<evidence type="ECO:0000305" key="4"/>
<evidence type="ECO:0007829" key="5">
    <source>
        <dbReference type="PDB" id="6TU3"/>
    </source>
</evidence>